<feature type="chain" id="PRO_0000368340" description="ATP synthase subunit b">
    <location>
        <begin position="1"/>
        <end position="166"/>
    </location>
</feature>
<feature type="transmembrane region" description="Helical" evidence="1">
    <location>
        <begin position="10"/>
        <end position="30"/>
    </location>
</feature>
<keyword id="KW-0066">ATP synthesis</keyword>
<keyword id="KW-0997">Cell inner membrane</keyword>
<keyword id="KW-1003">Cell membrane</keyword>
<keyword id="KW-0138">CF(0)</keyword>
<keyword id="KW-0375">Hydrogen ion transport</keyword>
<keyword id="KW-0406">Ion transport</keyword>
<keyword id="KW-0472">Membrane</keyword>
<keyword id="KW-0812">Transmembrane</keyword>
<keyword id="KW-1133">Transmembrane helix</keyword>
<keyword id="KW-0813">Transport</keyword>
<comment type="function">
    <text evidence="1">F(1)F(0) ATP synthase produces ATP from ADP in the presence of a proton or sodium gradient. F-type ATPases consist of two structural domains, F(1) containing the extramembraneous catalytic core and F(0) containing the membrane proton channel, linked together by a central stalk and a peripheral stalk. During catalysis, ATP synthesis in the catalytic domain of F(1) is coupled via a rotary mechanism of the central stalk subunits to proton translocation.</text>
</comment>
<comment type="function">
    <text evidence="1">Component of the F(0) channel, it forms part of the peripheral stalk, linking F(1) to F(0).</text>
</comment>
<comment type="subunit">
    <text evidence="1">F-type ATPases have 2 components, F(1) - the catalytic core - and F(0) - the membrane proton channel. F(1) has five subunits: alpha(3), beta(3), gamma(1), delta(1), epsilon(1). F(0) has three main subunits: a(1), b(2) and c(10-14). The alpha and beta chains form an alternating ring which encloses part of the gamma chain. F(1) is attached to F(0) by a central stalk formed by the gamma and epsilon chains, while a peripheral stalk is formed by the delta and b chains.</text>
</comment>
<comment type="subcellular location">
    <subcellularLocation>
        <location evidence="1">Cell inner membrane</location>
        <topology evidence="1">Single-pass membrane protein</topology>
    </subcellularLocation>
</comment>
<comment type="similarity">
    <text evidence="1">Belongs to the ATPase B chain family.</text>
</comment>
<organism>
    <name type="scientific">Phocaeicola vulgatus (strain ATCC 8482 / DSM 1447 / JCM 5826 / CCUG 4940 / NBRC 14291 / NCTC 11154)</name>
    <name type="common">Bacteroides vulgatus</name>
    <dbReference type="NCBI Taxonomy" id="435590"/>
    <lineage>
        <taxon>Bacteria</taxon>
        <taxon>Pseudomonadati</taxon>
        <taxon>Bacteroidota</taxon>
        <taxon>Bacteroidia</taxon>
        <taxon>Bacteroidales</taxon>
        <taxon>Bacteroidaceae</taxon>
        <taxon>Phocaeicola</taxon>
    </lineage>
</organism>
<proteinExistence type="inferred from homology"/>
<dbReference type="EMBL" id="CP000139">
    <property type="protein sequence ID" value="ABR40636.1"/>
    <property type="molecule type" value="Genomic_DNA"/>
</dbReference>
<dbReference type="RefSeq" id="WP_005846830.1">
    <property type="nucleotide sequence ID" value="NZ_JANSWM010000059.1"/>
</dbReference>
<dbReference type="SMR" id="A6L4M2"/>
<dbReference type="STRING" id="435590.BVU_2998"/>
<dbReference type="PaxDb" id="435590-BVU_2998"/>
<dbReference type="GeneID" id="93446873"/>
<dbReference type="KEGG" id="bvu:BVU_2998"/>
<dbReference type="eggNOG" id="COG0711">
    <property type="taxonomic scope" value="Bacteria"/>
</dbReference>
<dbReference type="HOGENOM" id="CLU_079215_4_1_10"/>
<dbReference type="BioCyc" id="BVUL435590:G1G59-3121-MONOMER"/>
<dbReference type="Proteomes" id="UP000002861">
    <property type="component" value="Chromosome"/>
</dbReference>
<dbReference type="GO" id="GO:0005886">
    <property type="term" value="C:plasma membrane"/>
    <property type="evidence" value="ECO:0007669"/>
    <property type="project" value="UniProtKB-SubCell"/>
</dbReference>
<dbReference type="GO" id="GO:0045259">
    <property type="term" value="C:proton-transporting ATP synthase complex"/>
    <property type="evidence" value="ECO:0007669"/>
    <property type="project" value="UniProtKB-KW"/>
</dbReference>
<dbReference type="GO" id="GO:0046933">
    <property type="term" value="F:proton-transporting ATP synthase activity, rotational mechanism"/>
    <property type="evidence" value="ECO:0007669"/>
    <property type="project" value="UniProtKB-UniRule"/>
</dbReference>
<dbReference type="GO" id="GO:0046961">
    <property type="term" value="F:proton-transporting ATPase activity, rotational mechanism"/>
    <property type="evidence" value="ECO:0007669"/>
    <property type="project" value="TreeGrafter"/>
</dbReference>
<dbReference type="CDD" id="cd06503">
    <property type="entry name" value="ATP-synt_Fo_b"/>
    <property type="match status" value="1"/>
</dbReference>
<dbReference type="Gene3D" id="1.20.5.620">
    <property type="entry name" value="F1F0 ATP synthase subunit B, membrane domain"/>
    <property type="match status" value="1"/>
</dbReference>
<dbReference type="HAMAP" id="MF_01398">
    <property type="entry name" value="ATP_synth_b_bprime"/>
    <property type="match status" value="1"/>
</dbReference>
<dbReference type="InterPro" id="IPR028987">
    <property type="entry name" value="ATP_synth_B-like_membr_sf"/>
</dbReference>
<dbReference type="InterPro" id="IPR002146">
    <property type="entry name" value="ATP_synth_b/b'su_bac/chlpt"/>
</dbReference>
<dbReference type="InterPro" id="IPR005864">
    <property type="entry name" value="ATP_synth_F0_bsu_bac"/>
</dbReference>
<dbReference type="InterPro" id="IPR050059">
    <property type="entry name" value="ATP_synthase_B_chain"/>
</dbReference>
<dbReference type="NCBIfam" id="TIGR01144">
    <property type="entry name" value="ATP_synt_b"/>
    <property type="match status" value="1"/>
</dbReference>
<dbReference type="PANTHER" id="PTHR33445:SF1">
    <property type="entry name" value="ATP SYNTHASE SUBUNIT B"/>
    <property type="match status" value="1"/>
</dbReference>
<dbReference type="PANTHER" id="PTHR33445">
    <property type="entry name" value="ATP SYNTHASE SUBUNIT B', CHLOROPLASTIC"/>
    <property type="match status" value="1"/>
</dbReference>
<dbReference type="Pfam" id="PF00430">
    <property type="entry name" value="ATP-synt_B"/>
    <property type="match status" value="1"/>
</dbReference>
<dbReference type="SUPFAM" id="SSF81573">
    <property type="entry name" value="F1F0 ATP synthase subunit B, membrane domain"/>
    <property type="match status" value="1"/>
</dbReference>
<gene>
    <name evidence="1" type="primary">atpF</name>
    <name type="ordered locus">BVU_2998</name>
</gene>
<name>ATPF_PHOV8</name>
<reference key="1">
    <citation type="journal article" date="2007" name="PLoS Biol.">
        <title>Evolution of symbiotic bacteria in the distal human intestine.</title>
        <authorList>
            <person name="Xu J."/>
            <person name="Mahowald M.A."/>
            <person name="Ley R.E."/>
            <person name="Lozupone C.A."/>
            <person name="Hamady M."/>
            <person name="Martens E.C."/>
            <person name="Henrissat B."/>
            <person name="Coutinho P.M."/>
            <person name="Minx P."/>
            <person name="Latreille P."/>
            <person name="Cordum H."/>
            <person name="Van Brunt A."/>
            <person name="Kim K."/>
            <person name="Fulton R.S."/>
            <person name="Fulton L.A."/>
            <person name="Clifton S.W."/>
            <person name="Wilson R.K."/>
            <person name="Knight R.D."/>
            <person name="Gordon J.I."/>
        </authorList>
    </citation>
    <scope>NUCLEOTIDE SEQUENCE [LARGE SCALE GENOMIC DNA]</scope>
    <source>
        <strain>ATCC 8482 / DSM 1447 / JCM 5826 / CCUG 4940 / NBRC 14291 / NCTC 11154</strain>
    </source>
</reference>
<protein>
    <recommendedName>
        <fullName evidence="1">ATP synthase subunit b</fullName>
    </recommendedName>
    <alternativeName>
        <fullName evidence="1">ATP synthase F(0) sector subunit b</fullName>
    </alternativeName>
    <alternativeName>
        <fullName evidence="1">ATPase subunit I</fullName>
    </alternativeName>
    <alternativeName>
        <fullName evidence="1">F-type ATPase subunit b</fullName>
        <shortName evidence="1">F-ATPase subunit b</shortName>
    </alternativeName>
</protein>
<sequence>MSLLTPDSGLLFWMVIVFGIVFVILAKYGFPVITRMVDERKQYIDKSLLAAREANEQLANIKADSEMILAKAHEEQARILNEAVATRERILKEAKTQAQVEGQKLLDEAKKQIQAEKDSAISDIRRQVAVLSVDIAEKVLRKNLDDEKEQMEMIDRLLDELTVSKD</sequence>
<evidence type="ECO:0000255" key="1">
    <source>
        <dbReference type="HAMAP-Rule" id="MF_01398"/>
    </source>
</evidence>
<accession>A6L4M2</accession>